<comment type="subcellular location">
    <subcellularLocation>
        <location evidence="2">Cell membrane</location>
        <topology evidence="2">Multi-pass membrane protein</topology>
    </subcellularLocation>
</comment>
<name>YXAI_BACSU</name>
<sequence length="151" mass="16946">MEKPAGFWIRFLAYFIDGIIVSVPSYIILFIINSVFVAGAVATNPYMTEEEYLVKYMTLAFLPTMLIMIVISVLYYGLLTASKMQGTLGKKILGLKVVNEQGERVSVGQGIGRYFAYILSGIIFYIGFIMIAFGEKKGLHDIICKTRVVYK</sequence>
<proteinExistence type="predicted"/>
<protein>
    <recommendedName>
        <fullName>Uncharacterized protein YxaI</fullName>
    </recommendedName>
</protein>
<evidence type="ECO:0000255" key="1"/>
<evidence type="ECO:0000305" key="2"/>
<organism>
    <name type="scientific">Bacillus subtilis (strain 168)</name>
    <dbReference type="NCBI Taxonomy" id="224308"/>
    <lineage>
        <taxon>Bacteria</taxon>
        <taxon>Bacillati</taxon>
        <taxon>Bacillota</taxon>
        <taxon>Bacilli</taxon>
        <taxon>Bacillales</taxon>
        <taxon>Bacillaceae</taxon>
        <taxon>Bacillus</taxon>
    </lineage>
</organism>
<feature type="chain" id="PRO_0000050000" description="Uncharacterized protein YxaI">
    <location>
        <begin position="1"/>
        <end position="151"/>
    </location>
</feature>
<feature type="transmembrane region" description="Helical" evidence="1">
    <location>
        <begin position="12"/>
        <end position="32"/>
    </location>
</feature>
<feature type="transmembrane region" description="Helical" evidence="1">
    <location>
        <begin position="59"/>
        <end position="79"/>
    </location>
</feature>
<feature type="transmembrane region" description="Helical" evidence="1">
    <location>
        <begin position="114"/>
        <end position="134"/>
    </location>
</feature>
<accession>P42108</accession>
<dbReference type="EMBL" id="AB005554">
    <property type="protein sequence ID" value="BAA21588.1"/>
    <property type="molecule type" value="Genomic_DNA"/>
</dbReference>
<dbReference type="EMBL" id="AL009126">
    <property type="protein sequence ID" value="CAB16033.1"/>
    <property type="molecule type" value="Genomic_DNA"/>
</dbReference>
<dbReference type="PIR" id="H70071">
    <property type="entry name" value="H70071"/>
</dbReference>
<dbReference type="RefSeq" id="NP_391876.1">
    <property type="nucleotide sequence ID" value="NC_000964.3"/>
</dbReference>
<dbReference type="RefSeq" id="WP_003242940.1">
    <property type="nucleotide sequence ID" value="NZ_OZ025638.1"/>
</dbReference>
<dbReference type="FunCoup" id="P42108">
    <property type="interactions" value="47"/>
</dbReference>
<dbReference type="STRING" id="224308.BSU39960"/>
<dbReference type="PaxDb" id="224308-BSU39960"/>
<dbReference type="DNASU" id="937676"/>
<dbReference type="EnsemblBacteria" id="CAB16033">
    <property type="protein sequence ID" value="CAB16033"/>
    <property type="gene ID" value="BSU_39960"/>
</dbReference>
<dbReference type="GeneID" id="937676"/>
<dbReference type="KEGG" id="bsu:BSU39960"/>
<dbReference type="PATRIC" id="fig|224308.179.peg.4322"/>
<dbReference type="eggNOG" id="COG1714">
    <property type="taxonomic scope" value="Bacteria"/>
</dbReference>
<dbReference type="InParanoid" id="P42108"/>
<dbReference type="OrthoDB" id="9793824at2"/>
<dbReference type="PhylomeDB" id="P42108"/>
<dbReference type="BioCyc" id="BSUB:BSU39960-MONOMER"/>
<dbReference type="Proteomes" id="UP000001570">
    <property type="component" value="Chromosome"/>
</dbReference>
<dbReference type="GO" id="GO:0005886">
    <property type="term" value="C:plasma membrane"/>
    <property type="evidence" value="ECO:0007669"/>
    <property type="project" value="UniProtKB-SubCell"/>
</dbReference>
<dbReference type="InterPro" id="IPR051791">
    <property type="entry name" value="Pra-immunoreactive"/>
</dbReference>
<dbReference type="InterPro" id="IPR010432">
    <property type="entry name" value="RDD"/>
</dbReference>
<dbReference type="PANTHER" id="PTHR36115:SF9">
    <property type="entry name" value="LMO1584 PROTEIN"/>
    <property type="match status" value="1"/>
</dbReference>
<dbReference type="PANTHER" id="PTHR36115">
    <property type="entry name" value="PROLINE-RICH ANTIGEN HOMOLOG-RELATED"/>
    <property type="match status" value="1"/>
</dbReference>
<dbReference type="Pfam" id="PF06271">
    <property type="entry name" value="RDD"/>
    <property type="match status" value="1"/>
</dbReference>
<reference key="1">
    <citation type="journal article" date="1995" name="DNA Res.">
        <title>Cloning and sequencing of a 36-kb region of the Bacillus subtilis genome between the gnt and iol operons.</title>
        <authorList>
            <person name="Yoshida K."/>
            <person name="Seki S."/>
            <person name="Fujimura M."/>
            <person name="Miwa Y."/>
            <person name="Fujita Y."/>
        </authorList>
    </citation>
    <scope>NUCLEOTIDE SEQUENCE [GENOMIC DNA]</scope>
    <source>
        <strain>168 / BGSC1A1</strain>
    </source>
</reference>
<reference key="2">
    <citation type="journal article" date="1997" name="Nature">
        <title>The complete genome sequence of the Gram-positive bacterium Bacillus subtilis.</title>
        <authorList>
            <person name="Kunst F."/>
            <person name="Ogasawara N."/>
            <person name="Moszer I."/>
            <person name="Albertini A.M."/>
            <person name="Alloni G."/>
            <person name="Azevedo V."/>
            <person name="Bertero M.G."/>
            <person name="Bessieres P."/>
            <person name="Bolotin A."/>
            <person name="Borchert S."/>
            <person name="Borriss R."/>
            <person name="Boursier L."/>
            <person name="Brans A."/>
            <person name="Braun M."/>
            <person name="Brignell S.C."/>
            <person name="Bron S."/>
            <person name="Brouillet S."/>
            <person name="Bruschi C.V."/>
            <person name="Caldwell B."/>
            <person name="Capuano V."/>
            <person name="Carter N.M."/>
            <person name="Choi S.-K."/>
            <person name="Codani J.-J."/>
            <person name="Connerton I.F."/>
            <person name="Cummings N.J."/>
            <person name="Daniel R.A."/>
            <person name="Denizot F."/>
            <person name="Devine K.M."/>
            <person name="Duesterhoeft A."/>
            <person name="Ehrlich S.D."/>
            <person name="Emmerson P.T."/>
            <person name="Entian K.-D."/>
            <person name="Errington J."/>
            <person name="Fabret C."/>
            <person name="Ferrari E."/>
            <person name="Foulger D."/>
            <person name="Fritz C."/>
            <person name="Fujita M."/>
            <person name="Fujita Y."/>
            <person name="Fuma S."/>
            <person name="Galizzi A."/>
            <person name="Galleron N."/>
            <person name="Ghim S.-Y."/>
            <person name="Glaser P."/>
            <person name="Goffeau A."/>
            <person name="Golightly E.J."/>
            <person name="Grandi G."/>
            <person name="Guiseppi G."/>
            <person name="Guy B.J."/>
            <person name="Haga K."/>
            <person name="Haiech J."/>
            <person name="Harwood C.R."/>
            <person name="Henaut A."/>
            <person name="Hilbert H."/>
            <person name="Holsappel S."/>
            <person name="Hosono S."/>
            <person name="Hullo M.-F."/>
            <person name="Itaya M."/>
            <person name="Jones L.-M."/>
            <person name="Joris B."/>
            <person name="Karamata D."/>
            <person name="Kasahara Y."/>
            <person name="Klaerr-Blanchard M."/>
            <person name="Klein C."/>
            <person name="Kobayashi Y."/>
            <person name="Koetter P."/>
            <person name="Koningstein G."/>
            <person name="Krogh S."/>
            <person name="Kumano M."/>
            <person name="Kurita K."/>
            <person name="Lapidus A."/>
            <person name="Lardinois S."/>
            <person name="Lauber J."/>
            <person name="Lazarevic V."/>
            <person name="Lee S.-M."/>
            <person name="Levine A."/>
            <person name="Liu H."/>
            <person name="Masuda S."/>
            <person name="Mauel C."/>
            <person name="Medigue C."/>
            <person name="Medina N."/>
            <person name="Mellado R.P."/>
            <person name="Mizuno M."/>
            <person name="Moestl D."/>
            <person name="Nakai S."/>
            <person name="Noback M."/>
            <person name="Noone D."/>
            <person name="O'Reilly M."/>
            <person name="Ogawa K."/>
            <person name="Ogiwara A."/>
            <person name="Oudega B."/>
            <person name="Park S.-H."/>
            <person name="Parro V."/>
            <person name="Pohl T.M."/>
            <person name="Portetelle D."/>
            <person name="Porwollik S."/>
            <person name="Prescott A.M."/>
            <person name="Presecan E."/>
            <person name="Pujic P."/>
            <person name="Purnelle B."/>
            <person name="Rapoport G."/>
            <person name="Rey M."/>
            <person name="Reynolds S."/>
            <person name="Rieger M."/>
            <person name="Rivolta C."/>
            <person name="Rocha E."/>
            <person name="Roche B."/>
            <person name="Rose M."/>
            <person name="Sadaie Y."/>
            <person name="Sato T."/>
            <person name="Scanlan E."/>
            <person name="Schleich S."/>
            <person name="Schroeter R."/>
            <person name="Scoffone F."/>
            <person name="Sekiguchi J."/>
            <person name="Sekowska A."/>
            <person name="Seror S.J."/>
            <person name="Serror P."/>
            <person name="Shin B.-S."/>
            <person name="Soldo B."/>
            <person name="Sorokin A."/>
            <person name="Tacconi E."/>
            <person name="Takagi T."/>
            <person name="Takahashi H."/>
            <person name="Takemaru K."/>
            <person name="Takeuchi M."/>
            <person name="Tamakoshi A."/>
            <person name="Tanaka T."/>
            <person name="Terpstra P."/>
            <person name="Tognoni A."/>
            <person name="Tosato V."/>
            <person name="Uchiyama S."/>
            <person name="Vandenbol M."/>
            <person name="Vannier F."/>
            <person name="Vassarotti A."/>
            <person name="Viari A."/>
            <person name="Wambutt R."/>
            <person name="Wedler E."/>
            <person name="Wedler H."/>
            <person name="Weitzenegger T."/>
            <person name="Winters P."/>
            <person name="Wipat A."/>
            <person name="Yamamoto H."/>
            <person name="Yamane K."/>
            <person name="Yasumoto K."/>
            <person name="Yata K."/>
            <person name="Yoshida K."/>
            <person name="Yoshikawa H.-F."/>
            <person name="Zumstein E."/>
            <person name="Yoshikawa H."/>
            <person name="Danchin A."/>
        </authorList>
    </citation>
    <scope>NUCLEOTIDE SEQUENCE [LARGE SCALE GENOMIC DNA]</scope>
    <source>
        <strain>168</strain>
    </source>
</reference>
<gene>
    <name type="primary">yxaI</name>
    <name type="ordered locus">BSU39960</name>
    <name type="ORF">S14IR</name>
</gene>
<keyword id="KW-1003">Cell membrane</keyword>
<keyword id="KW-0472">Membrane</keyword>
<keyword id="KW-1185">Reference proteome</keyword>
<keyword id="KW-0812">Transmembrane</keyword>
<keyword id="KW-1133">Transmembrane helix</keyword>